<sequence length="27" mass="3144">MTRCISKKMLLEVDALSLIYSPHLYMS</sequence>
<proteinExistence type="predicted"/>
<name>YJ136_YEAST</name>
<keyword id="KW-1185">Reference proteome</keyword>
<accession>Q3E801</accession>
<accession>D6VW48</accession>
<reference key="1">
    <citation type="journal article" date="1996" name="EMBO J.">
        <title>Complete nucleotide sequence of Saccharomyces cerevisiae chromosome X.</title>
        <authorList>
            <person name="Galibert F."/>
            <person name="Alexandraki D."/>
            <person name="Baur A."/>
            <person name="Boles E."/>
            <person name="Chalwatzis N."/>
            <person name="Chuat J.-C."/>
            <person name="Coster F."/>
            <person name="Cziepluch C."/>
            <person name="de Haan M."/>
            <person name="Domdey H."/>
            <person name="Durand P."/>
            <person name="Entian K.-D."/>
            <person name="Gatius M."/>
            <person name="Goffeau A."/>
            <person name="Grivell L.A."/>
            <person name="Hennemann A."/>
            <person name="Herbert C.J."/>
            <person name="Heumann K."/>
            <person name="Hilger F."/>
            <person name="Hollenberg C.P."/>
            <person name="Huang M.-E."/>
            <person name="Jacq C."/>
            <person name="Jauniaux J.-C."/>
            <person name="Katsoulou C."/>
            <person name="Kirchrath L."/>
            <person name="Kleine K."/>
            <person name="Kordes E."/>
            <person name="Koetter P."/>
            <person name="Liebl S."/>
            <person name="Louis E.J."/>
            <person name="Manus V."/>
            <person name="Mewes H.-W."/>
            <person name="Miosga T."/>
            <person name="Obermaier B."/>
            <person name="Perea J."/>
            <person name="Pohl T.M."/>
            <person name="Portetelle D."/>
            <person name="Pujol A."/>
            <person name="Purnelle B."/>
            <person name="Ramezani Rad M."/>
            <person name="Rasmussen S.W."/>
            <person name="Rose M."/>
            <person name="Rossau R."/>
            <person name="Schaaff-Gerstenschlaeger I."/>
            <person name="Smits P.H.M."/>
            <person name="Scarcez T."/>
            <person name="Soriano N."/>
            <person name="To Van D."/>
            <person name="Tzermia M."/>
            <person name="Van Broekhoven A."/>
            <person name="Vandenbol M."/>
            <person name="Wedler H."/>
            <person name="von Wettstein D."/>
            <person name="Wambutt R."/>
            <person name="Zagulski M."/>
            <person name="Zollner A."/>
            <person name="Karpfinger-Hartl L."/>
        </authorList>
    </citation>
    <scope>NUCLEOTIDE SEQUENCE [LARGE SCALE GENOMIC DNA]</scope>
    <source>
        <strain>ATCC 204508 / S288c</strain>
    </source>
</reference>
<reference key="2">
    <citation type="journal article" date="2014" name="G3 (Bethesda)">
        <title>The reference genome sequence of Saccharomyces cerevisiae: Then and now.</title>
        <authorList>
            <person name="Engel S.R."/>
            <person name="Dietrich F.S."/>
            <person name="Fisk D.G."/>
            <person name="Binkley G."/>
            <person name="Balakrishnan R."/>
            <person name="Costanzo M.C."/>
            <person name="Dwight S.S."/>
            <person name="Hitz B.C."/>
            <person name="Karra K."/>
            <person name="Nash R.S."/>
            <person name="Weng S."/>
            <person name="Wong E.D."/>
            <person name="Lloyd P."/>
            <person name="Skrzypek M.S."/>
            <person name="Miyasato S.R."/>
            <person name="Simison M."/>
            <person name="Cherry J.M."/>
        </authorList>
    </citation>
    <scope>GENOME REANNOTATION</scope>
    <source>
        <strain>ATCC 204508 / S288c</strain>
    </source>
</reference>
<organism>
    <name type="scientific">Saccharomyces cerevisiae (strain ATCC 204508 / S288c)</name>
    <name type="common">Baker's yeast</name>
    <dbReference type="NCBI Taxonomy" id="559292"/>
    <lineage>
        <taxon>Eukaryota</taxon>
        <taxon>Fungi</taxon>
        <taxon>Dikarya</taxon>
        <taxon>Ascomycota</taxon>
        <taxon>Saccharomycotina</taxon>
        <taxon>Saccharomycetes</taxon>
        <taxon>Saccharomycetales</taxon>
        <taxon>Saccharomycetaceae</taxon>
        <taxon>Saccharomyces</taxon>
    </lineage>
</organism>
<dbReference type="EMBL" id="Z49411">
    <property type="status" value="NOT_ANNOTATED_CDS"/>
    <property type="molecule type" value="Genomic_DNA"/>
</dbReference>
<dbReference type="EMBL" id="BK006943">
    <property type="protein sequence ID" value="DAA08664.1"/>
    <property type="molecule type" value="Genomic_DNA"/>
</dbReference>
<dbReference type="RefSeq" id="NP_878101.1">
    <property type="nucleotide sequence ID" value="NM_001184637.1"/>
</dbReference>
<dbReference type="BioGRID" id="37006">
    <property type="interactions" value="123"/>
</dbReference>
<dbReference type="FunCoup" id="Q3E801">
    <property type="interactions" value="8"/>
</dbReference>
<dbReference type="STRING" id="4932.YJL136W-A"/>
<dbReference type="PaxDb" id="4932-YJL136W-A"/>
<dbReference type="EnsemblFungi" id="YJL136W-A_mRNA">
    <property type="protein sequence ID" value="YJL136W-A"/>
    <property type="gene ID" value="YJL136W-A"/>
</dbReference>
<dbReference type="GeneID" id="1466464"/>
<dbReference type="KEGG" id="sce:YJL136W-A"/>
<dbReference type="AGR" id="SGD:S000028806"/>
<dbReference type="SGD" id="S000028806">
    <property type="gene designation" value="YJL136W-A"/>
</dbReference>
<dbReference type="VEuPathDB" id="FungiDB:YJL136W-A"/>
<dbReference type="HOGENOM" id="CLU_3415272_0_0_1"/>
<dbReference type="InParanoid" id="Q3E801"/>
<dbReference type="BioCyc" id="YEAST:G3O-31811-MONOMER"/>
<dbReference type="BioGRID-ORCS" id="1466464">
    <property type="hits" value="0 hits in 10 CRISPR screens"/>
</dbReference>
<dbReference type="PRO" id="PR:Q3E801"/>
<dbReference type="Proteomes" id="UP000002311">
    <property type="component" value="Chromosome X"/>
</dbReference>
<protein>
    <recommendedName>
        <fullName>Uncharacterized protein YJL136W-A</fullName>
    </recommendedName>
</protein>
<gene>
    <name type="ordered locus">YJL136W-A</name>
</gene>
<feature type="chain" id="PRO_0000245408" description="Uncharacterized protein YJL136W-A">
    <location>
        <begin position="1"/>
        <end position="27"/>
    </location>
</feature>